<organism>
    <name type="scientific">Staphylococcus aureus (strain COL)</name>
    <dbReference type="NCBI Taxonomy" id="93062"/>
    <lineage>
        <taxon>Bacteria</taxon>
        <taxon>Bacillati</taxon>
        <taxon>Bacillota</taxon>
        <taxon>Bacilli</taxon>
        <taxon>Bacillales</taxon>
        <taxon>Staphylococcaceae</taxon>
        <taxon>Staphylococcus</taxon>
    </lineage>
</organism>
<reference key="1">
    <citation type="journal article" date="2005" name="J. Bacteriol.">
        <title>Insights on evolution of virulence and resistance from the complete genome analysis of an early methicillin-resistant Staphylococcus aureus strain and a biofilm-producing methicillin-resistant Staphylococcus epidermidis strain.</title>
        <authorList>
            <person name="Gill S.R."/>
            <person name="Fouts D.E."/>
            <person name="Archer G.L."/>
            <person name="Mongodin E.F."/>
            <person name="DeBoy R.T."/>
            <person name="Ravel J."/>
            <person name="Paulsen I.T."/>
            <person name="Kolonay J.F."/>
            <person name="Brinkac L.M."/>
            <person name="Beanan M.J."/>
            <person name="Dodson R.J."/>
            <person name="Daugherty S.C."/>
            <person name="Madupu R."/>
            <person name="Angiuoli S.V."/>
            <person name="Durkin A.S."/>
            <person name="Haft D.H."/>
            <person name="Vamathevan J.J."/>
            <person name="Khouri H."/>
            <person name="Utterback T.R."/>
            <person name="Lee C."/>
            <person name="Dimitrov G."/>
            <person name="Jiang L."/>
            <person name="Qin H."/>
            <person name="Weidman J."/>
            <person name="Tran K."/>
            <person name="Kang K.H."/>
            <person name="Hance I.R."/>
            <person name="Nelson K.E."/>
            <person name="Fraser C.M."/>
        </authorList>
    </citation>
    <scope>NUCLEOTIDE SEQUENCE [LARGE SCALE GENOMIC DNA]</scope>
    <source>
        <strain>COL</strain>
    </source>
</reference>
<keyword id="KW-0963">Cytoplasm</keyword>
<keyword id="KW-0413">Isomerase</keyword>
<keyword id="KW-0464">Manganese</keyword>
<keyword id="KW-0479">Metal-binding</keyword>
<sequence length="392" mass="43796">MTRPFNRVHLIVMDSVGIGEAPDAADFKDEGSHTLRHTLEGFDQTLPNLEKLGLGNIDKLPVVNAVEQPEAYYTKLSEASVGKDTMTGHWEIMGLNIMQPFKVYPNGFPEELIQQIEEMTGRKVVANKPASGTQIIDEWGEHQMKTGDLIVYTSADPVLQIAAHEDIIPLEELYDICEKVRELTKDPKYLIGRIIARPYVGEPGNFTRTSNRHDYALKPFGKTVLDHLKDGGYDVIAIGKINDIYDGEGVTEAVRTKSNMDGMDQLMKIVKKDFTGISFLNLVDFDALYGHRRDKPGYAQAIKDFDDRLPELFSNLKEDDLVIITADHGNDPTAPGTDHTREYIPVIMYSPKFKGGHALESDTTFSSIGATIADNFNVTLPEFGKSYLKELK</sequence>
<proteinExistence type="inferred from homology"/>
<gene>
    <name evidence="1" type="primary">deoB</name>
    <name type="synonym">drm</name>
    <name type="ordered locus">SACOL0124</name>
</gene>
<accession>Q5HJM9</accession>
<comment type="function">
    <text evidence="1">Isomerase that catalyzes the conversion of deoxy-ribose 1-phosphate (dRib-1-P) and ribose 1-phosphate (Rib-1-P) to deoxy-ribose 5-phosphate (dRib-5-P) and ribose 5-phosphate (Rib-5-P), respectively.</text>
</comment>
<comment type="catalytic activity">
    <reaction evidence="1">
        <text>2-deoxy-alpha-D-ribose 1-phosphate = 2-deoxy-D-ribose 5-phosphate</text>
        <dbReference type="Rhea" id="RHEA:27658"/>
        <dbReference type="ChEBI" id="CHEBI:57259"/>
        <dbReference type="ChEBI" id="CHEBI:62877"/>
        <dbReference type="EC" id="5.4.2.7"/>
    </reaction>
</comment>
<comment type="catalytic activity">
    <reaction evidence="1">
        <text>alpha-D-ribose 1-phosphate = D-ribose 5-phosphate</text>
        <dbReference type="Rhea" id="RHEA:18793"/>
        <dbReference type="ChEBI" id="CHEBI:57720"/>
        <dbReference type="ChEBI" id="CHEBI:78346"/>
        <dbReference type="EC" id="5.4.2.7"/>
    </reaction>
</comment>
<comment type="cofactor">
    <cofactor evidence="1">
        <name>Mn(2+)</name>
        <dbReference type="ChEBI" id="CHEBI:29035"/>
    </cofactor>
    <text evidence="1">Binds 2 manganese ions.</text>
</comment>
<comment type="pathway">
    <text evidence="1">Carbohydrate degradation; 2-deoxy-D-ribose 1-phosphate degradation; D-glyceraldehyde 3-phosphate and acetaldehyde from 2-deoxy-alpha-D-ribose 1-phosphate: step 1/2.</text>
</comment>
<comment type="subcellular location">
    <subcellularLocation>
        <location evidence="1">Cytoplasm</location>
    </subcellularLocation>
</comment>
<comment type="similarity">
    <text evidence="1">Belongs to the phosphopentomutase family.</text>
</comment>
<feature type="chain" id="PRO_0000199839" description="Phosphopentomutase">
    <location>
        <begin position="1"/>
        <end position="392"/>
    </location>
</feature>
<feature type="binding site" evidence="1">
    <location>
        <position position="14"/>
    </location>
    <ligand>
        <name>Mn(2+)</name>
        <dbReference type="ChEBI" id="CHEBI:29035"/>
        <label>1</label>
    </ligand>
</feature>
<feature type="binding site" evidence="1">
    <location>
        <position position="286"/>
    </location>
    <ligand>
        <name>Mn(2+)</name>
        <dbReference type="ChEBI" id="CHEBI:29035"/>
        <label>2</label>
    </ligand>
</feature>
<feature type="binding site" evidence="1">
    <location>
        <position position="291"/>
    </location>
    <ligand>
        <name>Mn(2+)</name>
        <dbReference type="ChEBI" id="CHEBI:29035"/>
        <label>2</label>
    </ligand>
</feature>
<feature type="binding site" evidence="1">
    <location>
        <position position="327"/>
    </location>
    <ligand>
        <name>Mn(2+)</name>
        <dbReference type="ChEBI" id="CHEBI:29035"/>
        <label>1</label>
    </ligand>
</feature>
<feature type="binding site" evidence="1">
    <location>
        <position position="328"/>
    </location>
    <ligand>
        <name>Mn(2+)</name>
        <dbReference type="ChEBI" id="CHEBI:29035"/>
        <label>1</label>
    </ligand>
</feature>
<feature type="binding site" evidence="1">
    <location>
        <position position="339"/>
    </location>
    <ligand>
        <name>Mn(2+)</name>
        <dbReference type="ChEBI" id="CHEBI:29035"/>
        <label>2</label>
    </ligand>
</feature>
<evidence type="ECO:0000255" key="1">
    <source>
        <dbReference type="HAMAP-Rule" id="MF_00740"/>
    </source>
</evidence>
<protein>
    <recommendedName>
        <fullName evidence="1">Phosphopentomutase</fullName>
        <ecNumber evidence="1">5.4.2.7</ecNumber>
    </recommendedName>
    <alternativeName>
        <fullName evidence="1">Phosphodeoxyribomutase</fullName>
    </alternativeName>
</protein>
<dbReference type="EC" id="5.4.2.7" evidence="1"/>
<dbReference type="EMBL" id="CP000046">
    <property type="protein sequence ID" value="AAW37425.1"/>
    <property type="molecule type" value="Genomic_DNA"/>
</dbReference>
<dbReference type="RefSeq" id="WP_000197806.1">
    <property type="nucleotide sequence ID" value="NZ_JBGOFO010000001.1"/>
</dbReference>
<dbReference type="SMR" id="Q5HJM9"/>
<dbReference type="KEGG" id="sac:SACOL0124"/>
<dbReference type="HOGENOM" id="CLU_053861_0_0_9"/>
<dbReference type="UniPathway" id="UPA00002">
    <property type="reaction ID" value="UER00467"/>
</dbReference>
<dbReference type="Proteomes" id="UP000000530">
    <property type="component" value="Chromosome"/>
</dbReference>
<dbReference type="GO" id="GO:0005829">
    <property type="term" value="C:cytosol"/>
    <property type="evidence" value="ECO:0007669"/>
    <property type="project" value="TreeGrafter"/>
</dbReference>
<dbReference type="GO" id="GO:0000287">
    <property type="term" value="F:magnesium ion binding"/>
    <property type="evidence" value="ECO:0007669"/>
    <property type="project" value="InterPro"/>
</dbReference>
<dbReference type="GO" id="GO:0030145">
    <property type="term" value="F:manganese ion binding"/>
    <property type="evidence" value="ECO:0007669"/>
    <property type="project" value="UniProtKB-UniRule"/>
</dbReference>
<dbReference type="GO" id="GO:0008973">
    <property type="term" value="F:phosphopentomutase activity"/>
    <property type="evidence" value="ECO:0007669"/>
    <property type="project" value="UniProtKB-UniRule"/>
</dbReference>
<dbReference type="GO" id="GO:0006018">
    <property type="term" value="P:2-deoxyribose 1-phosphate catabolic process"/>
    <property type="evidence" value="ECO:0007669"/>
    <property type="project" value="UniProtKB-UniRule"/>
</dbReference>
<dbReference type="GO" id="GO:0006015">
    <property type="term" value="P:5-phosphoribose 1-diphosphate biosynthetic process"/>
    <property type="evidence" value="ECO:0007669"/>
    <property type="project" value="UniProtKB-UniPathway"/>
</dbReference>
<dbReference type="GO" id="GO:0043094">
    <property type="term" value="P:metabolic compound salvage"/>
    <property type="evidence" value="ECO:0007669"/>
    <property type="project" value="InterPro"/>
</dbReference>
<dbReference type="GO" id="GO:0009117">
    <property type="term" value="P:nucleotide metabolic process"/>
    <property type="evidence" value="ECO:0007669"/>
    <property type="project" value="InterPro"/>
</dbReference>
<dbReference type="CDD" id="cd16009">
    <property type="entry name" value="PPM"/>
    <property type="match status" value="1"/>
</dbReference>
<dbReference type="FunFam" id="3.30.70.1250:FF:000001">
    <property type="entry name" value="Phosphopentomutase"/>
    <property type="match status" value="1"/>
</dbReference>
<dbReference type="Gene3D" id="3.40.720.10">
    <property type="entry name" value="Alkaline Phosphatase, subunit A"/>
    <property type="match status" value="1"/>
</dbReference>
<dbReference type="Gene3D" id="3.30.70.1250">
    <property type="entry name" value="Phosphopentomutase"/>
    <property type="match status" value="1"/>
</dbReference>
<dbReference type="HAMAP" id="MF_00740">
    <property type="entry name" value="Phosphopentomut"/>
    <property type="match status" value="1"/>
</dbReference>
<dbReference type="InterPro" id="IPR017850">
    <property type="entry name" value="Alkaline_phosphatase_core_sf"/>
</dbReference>
<dbReference type="InterPro" id="IPR010045">
    <property type="entry name" value="DeoB"/>
</dbReference>
<dbReference type="InterPro" id="IPR006124">
    <property type="entry name" value="Metalloenzyme"/>
</dbReference>
<dbReference type="InterPro" id="IPR024052">
    <property type="entry name" value="Phosphopentomutase_DeoB_cap_sf"/>
</dbReference>
<dbReference type="NCBIfam" id="TIGR01696">
    <property type="entry name" value="deoB"/>
    <property type="match status" value="1"/>
</dbReference>
<dbReference type="NCBIfam" id="NF003766">
    <property type="entry name" value="PRK05362.1"/>
    <property type="match status" value="1"/>
</dbReference>
<dbReference type="PANTHER" id="PTHR21110">
    <property type="entry name" value="PHOSPHOPENTOMUTASE"/>
    <property type="match status" value="1"/>
</dbReference>
<dbReference type="PANTHER" id="PTHR21110:SF0">
    <property type="entry name" value="PHOSPHOPENTOMUTASE"/>
    <property type="match status" value="1"/>
</dbReference>
<dbReference type="Pfam" id="PF01676">
    <property type="entry name" value="Metalloenzyme"/>
    <property type="match status" value="1"/>
</dbReference>
<dbReference type="PIRSF" id="PIRSF001491">
    <property type="entry name" value="Ppentomutase"/>
    <property type="match status" value="1"/>
</dbReference>
<dbReference type="SUPFAM" id="SSF53649">
    <property type="entry name" value="Alkaline phosphatase-like"/>
    <property type="match status" value="1"/>
</dbReference>
<dbReference type="SUPFAM" id="SSF143856">
    <property type="entry name" value="DeoB insert domain-like"/>
    <property type="match status" value="1"/>
</dbReference>
<name>DEOB_STAAC</name>